<keyword id="KW-1003">Cell membrane</keyword>
<keyword id="KW-0449">Lipoprotein</keyword>
<keyword id="KW-0464">Manganese</keyword>
<keyword id="KW-0472">Membrane</keyword>
<keyword id="KW-0479">Metal-binding</keyword>
<keyword id="KW-0564">Palmitate</keyword>
<keyword id="KW-0732">Signal</keyword>
<keyword id="KW-0813">Transport</keyword>
<accession>P42363</accession>
<protein>
    <recommendedName>
        <fullName evidence="4">Manganese ABC transporter substrate-binding lipoprotein PsaA</fullName>
    </recommendedName>
    <alternativeName>
        <fullName>Pneumococcal surface adhesin A</fullName>
    </alternativeName>
</protein>
<comment type="function">
    <text evidence="1">Part of the ATP-binding cassette (ABC) transport system PsaABC involved in manganese import (By similarity). Binds manganese with high affinity and specificity and delivers it to the membrane permease for translocation into the cytoplasm (By similarity). Also acts as an adhesin which is involved on adherence to extracellular matrix (By similarity).</text>
</comment>
<comment type="subcellular location">
    <subcellularLocation>
        <location evidence="2">Cell membrane</location>
        <topology evidence="2">Lipid-anchor</topology>
    </subcellularLocation>
</comment>
<comment type="similarity">
    <text evidence="4">Belongs to the bacterial solute-binding protein 9 family. Lipoprotein receptor antigen (Lrai) subfamily.</text>
</comment>
<evidence type="ECO:0000250" key="1">
    <source>
        <dbReference type="UniProtKB" id="P0A4G2"/>
    </source>
</evidence>
<evidence type="ECO:0000255" key="2">
    <source>
        <dbReference type="PROSITE-ProRule" id="PRU00303"/>
    </source>
</evidence>
<evidence type="ECO:0000303" key="3">
    <source>
    </source>
</evidence>
<evidence type="ECO:0000305" key="4"/>
<gene>
    <name evidence="3" type="primary">psaA</name>
    <name type="synonym">papA</name>
</gene>
<name>MTSA_STREE</name>
<sequence length="310" mass="34538">MKKIASVLALFVALLFGLLACSKGTSSKSSSDKLKVVTTNSILADITKNIAGDKIELHSIVPVGQDPHEYEPLPEDVKKTSQADLIFYNGINLETGGNAWFTKLVKNANKVENKDYFAASDGVEVIYLEGQNQAGKEDPHAWLNLENGIIYAKNIAKQLIAKDPKNKDFYEKNLAAYTEKLSKLDQEAKQAFNNIPAEKKMIVTSEGCFKYFSKAYGVPSAYIWEINTEVEGTPEQIKTLLEKLRQTKVPSLFVESSVDERPMKTVSKDSNIPIFAKIFTDSIAKEGEEGDSYYSMMKWNLEKIAEGLNK</sequence>
<organism>
    <name type="scientific">Streptococcus pneumoniae</name>
    <dbReference type="NCBI Taxonomy" id="1313"/>
    <lineage>
        <taxon>Bacteria</taxon>
        <taxon>Bacillati</taxon>
        <taxon>Bacillota</taxon>
        <taxon>Bacilli</taxon>
        <taxon>Lactobacillales</taxon>
        <taxon>Streptococcaceae</taxon>
        <taxon>Streptococcus</taxon>
    </lineage>
</organism>
<reference key="1">
    <citation type="journal article" date="1994" name="Infect. Immun.">
        <title>Cloning and nucleotide sequence analysis of psaA, the Streptococcus pneumoniae gene encoding a 37-kilodalton protein homologous to previously reported Streptococcus sp. adhesins.</title>
        <authorList>
            <person name="Sampson J.S."/>
            <person name="O'Connor S.P."/>
            <person name="Stinson A.R."/>
            <person name="Tharpe J.A."/>
            <person name="Russell H."/>
        </authorList>
    </citation>
    <scope>NUCLEOTIDE SEQUENCE [GENOMIC DNA]</scope>
    <source>
        <strain>R36A</strain>
    </source>
</reference>
<proteinExistence type="inferred from homology"/>
<feature type="signal peptide" evidence="2">
    <location>
        <begin position="1"/>
        <end position="20"/>
    </location>
</feature>
<feature type="chain" id="PRO_0000031892" description="Manganese ABC transporter substrate-binding lipoprotein PsaA">
    <location>
        <begin position="21"/>
        <end position="310"/>
    </location>
</feature>
<feature type="binding site" evidence="1">
    <location>
        <position position="68"/>
    </location>
    <ligand>
        <name>Mn(2+)</name>
        <dbReference type="ChEBI" id="CHEBI:29035"/>
    </ligand>
</feature>
<feature type="binding site" evidence="1">
    <location>
        <position position="140"/>
    </location>
    <ligand>
        <name>Mn(2+)</name>
        <dbReference type="ChEBI" id="CHEBI:29035"/>
    </ligand>
</feature>
<feature type="binding site" evidence="1">
    <location>
        <position position="206"/>
    </location>
    <ligand>
        <name>Mn(2+)</name>
        <dbReference type="ChEBI" id="CHEBI:29035"/>
    </ligand>
</feature>
<feature type="binding site" evidence="1">
    <location>
        <position position="281"/>
    </location>
    <ligand>
        <name>Mn(2+)</name>
        <dbReference type="ChEBI" id="CHEBI:29035"/>
    </ligand>
</feature>
<feature type="lipid moiety-binding region" description="N-palmitoyl cysteine" evidence="2">
    <location>
        <position position="21"/>
    </location>
</feature>
<feature type="lipid moiety-binding region" description="S-diacylglycerol cysteine" evidence="2">
    <location>
        <position position="21"/>
    </location>
</feature>
<dbReference type="EMBL" id="L19055">
    <property type="protein sequence ID" value="AAA16798.1"/>
    <property type="molecule type" value="Unassigned_DNA"/>
</dbReference>
<dbReference type="SMR" id="P42363"/>
<dbReference type="GO" id="GO:0005886">
    <property type="term" value="C:plasma membrane"/>
    <property type="evidence" value="ECO:0007669"/>
    <property type="project" value="UniProtKB-SubCell"/>
</dbReference>
<dbReference type="GO" id="GO:0046872">
    <property type="term" value="F:metal ion binding"/>
    <property type="evidence" value="ECO:0007669"/>
    <property type="project" value="UniProtKB-KW"/>
</dbReference>
<dbReference type="GO" id="GO:0007155">
    <property type="term" value="P:cell adhesion"/>
    <property type="evidence" value="ECO:0007669"/>
    <property type="project" value="InterPro"/>
</dbReference>
<dbReference type="GO" id="GO:0030001">
    <property type="term" value="P:metal ion transport"/>
    <property type="evidence" value="ECO:0007669"/>
    <property type="project" value="InterPro"/>
</dbReference>
<dbReference type="CDD" id="cd01137">
    <property type="entry name" value="PsaA"/>
    <property type="match status" value="1"/>
</dbReference>
<dbReference type="Gene3D" id="3.40.50.1980">
    <property type="entry name" value="Nitrogenase molybdenum iron protein domain"/>
    <property type="match status" value="2"/>
</dbReference>
<dbReference type="InterPro" id="IPR006129">
    <property type="entry name" value="AdhesinB"/>
</dbReference>
<dbReference type="InterPro" id="IPR050492">
    <property type="entry name" value="Bact_metal-bind_prot9"/>
</dbReference>
<dbReference type="InterPro" id="IPR006128">
    <property type="entry name" value="Lipoprotein_PsaA-like"/>
</dbReference>
<dbReference type="InterPro" id="IPR006127">
    <property type="entry name" value="ZnuA-like"/>
</dbReference>
<dbReference type="NCBIfam" id="NF040928">
    <property type="entry name" value="ABC_lipo_SloC"/>
    <property type="match status" value="1"/>
</dbReference>
<dbReference type="PANTHER" id="PTHR42953">
    <property type="entry name" value="HIGH-AFFINITY ZINC UPTAKE SYSTEM PROTEIN ZNUA-RELATED"/>
    <property type="match status" value="1"/>
</dbReference>
<dbReference type="PANTHER" id="PTHR42953:SF1">
    <property type="entry name" value="METAL-BINDING PROTEIN HI_0362-RELATED"/>
    <property type="match status" value="1"/>
</dbReference>
<dbReference type="Pfam" id="PF01297">
    <property type="entry name" value="ZnuA"/>
    <property type="match status" value="1"/>
</dbReference>
<dbReference type="PRINTS" id="PR00691">
    <property type="entry name" value="ADHESINB"/>
</dbReference>
<dbReference type="PRINTS" id="PR00690">
    <property type="entry name" value="ADHESNFAMILY"/>
</dbReference>
<dbReference type="SUPFAM" id="SSF53807">
    <property type="entry name" value="Helical backbone' metal receptor"/>
    <property type="match status" value="1"/>
</dbReference>
<dbReference type="PROSITE" id="PS51257">
    <property type="entry name" value="PROKAR_LIPOPROTEIN"/>
    <property type="match status" value="1"/>
</dbReference>